<keyword id="KW-0175">Coiled coil</keyword>
<keyword id="KW-0963">Cytoplasm</keyword>
<keyword id="KW-0968">Cytoplasmic vesicle</keyword>
<keyword id="KW-0931">ER-Golgi transport</keyword>
<keyword id="KW-0333">Golgi apparatus</keyword>
<keyword id="KW-0449">Lipoprotein</keyword>
<keyword id="KW-0472">Membrane</keyword>
<keyword id="KW-0488">Methylation</keyword>
<keyword id="KW-0564">Palmitate</keyword>
<keyword id="KW-0636">Prenylation</keyword>
<keyword id="KW-0653">Protein transport</keyword>
<keyword id="KW-1185">Reference proteome</keyword>
<keyword id="KW-0808">Transferase</keyword>
<keyword id="KW-0813">Transport</keyword>
<protein>
    <recommendedName>
        <fullName>Synaptobrevin homolog YKT6</fullName>
        <ecNumber>2.3.1.-</ecNumber>
    </recommendedName>
</protein>
<proteinExistence type="evidence at transcript level"/>
<organism>
    <name type="scientific">Danio rerio</name>
    <name type="common">Zebrafish</name>
    <name type="synonym">Brachydanio rerio</name>
    <dbReference type="NCBI Taxonomy" id="7955"/>
    <lineage>
        <taxon>Eukaryota</taxon>
        <taxon>Metazoa</taxon>
        <taxon>Chordata</taxon>
        <taxon>Craniata</taxon>
        <taxon>Vertebrata</taxon>
        <taxon>Euteleostomi</taxon>
        <taxon>Actinopterygii</taxon>
        <taxon>Neopterygii</taxon>
        <taxon>Teleostei</taxon>
        <taxon>Ostariophysi</taxon>
        <taxon>Cypriniformes</taxon>
        <taxon>Danionidae</taxon>
        <taxon>Danioninae</taxon>
        <taxon>Danio</taxon>
    </lineage>
</organism>
<accession>Q7ZUN8</accession>
<reference key="1">
    <citation type="journal article" date="2004" name="Proc. Natl. Acad. Sci. U.S.A.">
        <title>Hematopoietic gene expression profile in zebrafish kidney marrow.</title>
        <authorList>
            <person name="Song H.-D."/>
            <person name="Sun X.-J."/>
            <person name="Deng M."/>
            <person name="Zhang G.-W."/>
            <person name="Zhou Y."/>
            <person name="Wu X.-Y."/>
            <person name="Sheng Y."/>
            <person name="Chen Y."/>
            <person name="Ruan Z."/>
            <person name="Jiang C.-L."/>
            <person name="Fan H.-Y."/>
            <person name="Zon L.I."/>
            <person name="Kanki J.P."/>
            <person name="Liu T.X."/>
            <person name="Look A.T."/>
            <person name="Chen Z."/>
        </authorList>
    </citation>
    <scope>NUCLEOTIDE SEQUENCE [LARGE SCALE MRNA]</scope>
    <source>
        <tissue>Kidney marrow</tissue>
    </source>
</reference>
<reference key="2">
    <citation type="submission" date="2003-03" db="EMBL/GenBank/DDBJ databases">
        <authorList>
            <consortium name="NIH - Zebrafish Gene Collection (ZGC) project"/>
        </authorList>
    </citation>
    <scope>NUCLEOTIDE SEQUENCE [LARGE SCALE MRNA]</scope>
    <source>
        <strain>AB</strain>
    </source>
</reference>
<gene>
    <name type="primary">ykt6</name>
    <name type="ORF">zgc:55536</name>
</gene>
<name>YKT6_DANRE</name>
<comment type="function">
    <text evidence="2">Vesicular soluble NSF attachment protein receptor (v-SNARE) mediating vesicle docking and fusion to a specific acceptor cellular compartment. Functions in endoplasmic reticulum to Golgi transport; as part of a SNARE complex composed of GOSR1, GOSR2 and STX5. Functions in early/recycling endosome to TGN transport; as part of a SNARE complex composed of BET1L, GOSR1 and STX5. Has a S-palmitoyl transferase activity.</text>
</comment>
<comment type="subcellular location">
    <subcellularLocation>
        <location evidence="1">Cytoplasm</location>
        <location evidence="1">Cytosol</location>
    </subcellularLocation>
    <subcellularLocation>
        <location evidence="1">Cytoplasmic vesicle membrane</location>
        <topology evidence="1">Lipid-anchor</topology>
        <orientation evidence="1">Cytoplasmic side</orientation>
    </subcellularLocation>
    <subcellularLocation>
        <location evidence="1">Golgi apparatus membrane</location>
        <topology evidence="1">Lipid-anchor</topology>
        <orientation evidence="1">Cytoplasmic side</orientation>
    </subcellularLocation>
    <text evidence="1">Probably cycles through vesicles between Golgi and endosomes.</text>
</comment>
<comment type="domain">
    <text evidence="1">The longin domain regulates palmitoylation and membrane targeting.</text>
</comment>
<comment type="PTM">
    <text evidence="2">Palmitoylated; catalyzes its own palmitoylation. Palmitoylation is required for Golgi targeting.</text>
</comment>
<comment type="PTM">
    <text evidence="2">Farnesylation is required for Golgi targeting.</text>
</comment>
<comment type="similarity">
    <text evidence="5">Belongs to the synaptobrevin family.</text>
</comment>
<evidence type="ECO:0000250" key="1"/>
<evidence type="ECO:0000250" key="2">
    <source>
        <dbReference type="UniProtKB" id="O15498"/>
    </source>
</evidence>
<evidence type="ECO:0000255" key="3">
    <source>
        <dbReference type="PROSITE-ProRule" id="PRU00231"/>
    </source>
</evidence>
<evidence type="ECO:0000255" key="4">
    <source>
        <dbReference type="PROSITE-ProRule" id="PRU00290"/>
    </source>
</evidence>
<evidence type="ECO:0000305" key="5"/>
<sequence length="198" mass="22405">MKLYSLSVLHKGSTKANLLKATYDLSSFSFFQRSSVQEFMTFTSALIVERSALGSRASVKEQEYLCHVYVRNDNLGGVVIADSEYPSRVCFTLLDKVLDEFSRQVNSIDWPSGSPATIQYTALDSHLARYQNPREADAMTKVQAELDETKIILHNTMESLLERGEKLDDLVQKSEHLGNQSKAFYKTARKQNSCCEIM</sequence>
<feature type="chain" id="PRO_0000280712" description="Synaptobrevin homolog YKT6">
    <location>
        <begin position="1"/>
        <end position="195"/>
    </location>
</feature>
<feature type="propeptide" id="PRO_0000396664" description="Removed in mature form" evidence="1">
    <location>
        <begin position="196"/>
        <end position="198"/>
    </location>
</feature>
<feature type="domain" description="Longin" evidence="3">
    <location>
        <begin position="8"/>
        <end position="131"/>
    </location>
</feature>
<feature type="domain" description="v-SNARE coiled-coil homology" evidence="4">
    <location>
        <begin position="138"/>
        <end position="198"/>
    </location>
</feature>
<feature type="modified residue" description="Cysteine methyl ester" evidence="1">
    <location>
        <position position="195"/>
    </location>
</feature>
<feature type="lipid moiety-binding region" description="S-palmitoyl cysteine" evidence="1">
    <location>
        <position position="194"/>
    </location>
</feature>
<feature type="lipid moiety-binding region" description="S-farnesyl cysteine" evidence="1">
    <location>
        <position position="195"/>
    </location>
</feature>
<dbReference type="EC" id="2.3.1.-"/>
<dbReference type="EMBL" id="AY391470">
    <property type="protein sequence ID" value="AAQ91282.1"/>
    <property type="molecule type" value="mRNA"/>
</dbReference>
<dbReference type="EMBL" id="BC048049">
    <property type="protein sequence ID" value="AAH48049.1"/>
    <property type="molecule type" value="mRNA"/>
</dbReference>
<dbReference type="RefSeq" id="NP_957386.1">
    <property type="nucleotide sequence ID" value="NM_201092.1"/>
</dbReference>
<dbReference type="SMR" id="Q7ZUN8"/>
<dbReference type="FunCoup" id="Q7ZUN8">
    <property type="interactions" value="3060"/>
</dbReference>
<dbReference type="STRING" id="7955.ENSDARP00000121331"/>
<dbReference type="PaxDb" id="7955-ENSDARP00000121331"/>
<dbReference type="PeptideAtlas" id="Q7ZUN8"/>
<dbReference type="GeneID" id="394067"/>
<dbReference type="KEGG" id="dre:394067"/>
<dbReference type="AGR" id="ZFIN:ZDB-GENE-040426-733"/>
<dbReference type="CTD" id="10652"/>
<dbReference type="ZFIN" id="ZDB-GENE-040426-733">
    <property type="gene designation" value="ykt6"/>
</dbReference>
<dbReference type="eggNOG" id="KOG0861">
    <property type="taxonomic scope" value="Eukaryota"/>
</dbReference>
<dbReference type="InParanoid" id="Q7ZUN8"/>
<dbReference type="OrthoDB" id="27923at2759"/>
<dbReference type="PhylomeDB" id="Q7ZUN8"/>
<dbReference type="Reactome" id="R-DRE-204005">
    <property type="pathway name" value="COPII-mediated vesicle transport"/>
</dbReference>
<dbReference type="Reactome" id="R-DRE-6807878">
    <property type="pathway name" value="COPI-mediated anterograde transport"/>
</dbReference>
<dbReference type="Reactome" id="R-DRE-6811438">
    <property type="pathway name" value="Intra-Golgi traffic"/>
</dbReference>
<dbReference type="PRO" id="PR:Q7ZUN8"/>
<dbReference type="Proteomes" id="UP000000437">
    <property type="component" value="Chromosome 10"/>
</dbReference>
<dbReference type="GO" id="GO:0030659">
    <property type="term" value="C:cytoplasmic vesicle membrane"/>
    <property type="evidence" value="ECO:0007669"/>
    <property type="project" value="UniProtKB-SubCell"/>
</dbReference>
<dbReference type="GO" id="GO:0005829">
    <property type="term" value="C:cytosol"/>
    <property type="evidence" value="ECO:0007669"/>
    <property type="project" value="UniProtKB-SubCell"/>
</dbReference>
<dbReference type="GO" id="GO:0005794">
    <property type="term" value="C:Golgi apparatus"/>
    <property type="evidence" value="ECO:0000318"/>
    <property type="project" value="GO_Central"/>
</dbReference>
<dbReference type="GO" id="GO:0000139">
    <property type="term" value="C:Golgi membrane"/>
    <property type="evidence" value="ECO:0007669"/>
    <property type="project" value="UniProtKB-SubCell"/>
</dbReference>
<dbReference type="GO" id="GO:0005484">
    <property type="term" value="F:SNAP receptor activity"/>
    <property type="evidence" value="ECO:0000318"/>
    <property type="project" value="GO_Central"/>
</dbReference>
<dbReference type="GO" id="GO:0016740">
    <property type="term" value="F:transferase activity"/>
    <property type="evidence" value="ECO:0007669"/>
    <property type="project" value="UniProtKB-KW"/>
</dbReference>
<dbReference type="GO" id="GO:0006888">
    <property type="term" value="P:endoplasmic reticulum to Golgi vesicle-mediated transport"/>
    <property type="evidence" value="ECO:0000318"/>
    <property type="project" value="GO_Central"/>
</dbReference>
<dbReference type="GO" id="GO:0015031">
    <property type="term" value="P:protein transport"/>
    <property type="evidence" value="ECO:0007669"/>
    <property type="project" value="UniProtKB-KW"/>
</dbReference>
<dbReference type="CDD" id="cd14824">
    <property type="entry name" value="Longin"/>
    <property type="match status" value="1"/>
</dbReference>
<dbReference type="CDD" id="cd15867">
    <property type="entry name" value="R-SNARE_YKT6"/>
    <property type="match status" value="1"/>
</dbReference>
<dbReference type="FunFam" id="3.30.450.50:FF:000013">
    <property type="entry name" value="Synaptobrevin homolog YKT6"/>
    <property type="match status" value="1"/>
</dbReference>
<dbReference type="FunFam" id="1.20.5.110:FF:000020">
    <property type="entry name" value="synaptobrevin homolog YKT6"/>
    <property type="match status" value="1"/>
</dbReference>
<dbReference type="Gene3D" id="1.20.5.110">
    <property type="match status" value="1"/>
</dbReference>
<dbReference type="Gene3D" id="3.30.450.50">
    <property type="entry name" value="Longin domain"/>
    <property type="match status" value="1"/>
</dbReference>
<dbReference type="InterPro" id="IPR011012">
    <property type="entry name" value="Longin-like_dom_sf"/>
</dbReference>
<dbReference type="InterPro" id="IPR010908">
    <property type="entry name" value="Longin_dom"/>
</dbReference>
<dbReference type="InterPro" id="IPR045848">
    <property type="entry name" value="R-SNARE_YKT6"/>
</dbReference>
<dbReference type="InterPro" id="IPR042855">
    <property type="entry name" value="V_SNARE_CC"/>
</dbReference>
<dbReference type="PANTHER" id="PTHR45806">
    <property type="entry name" value="SYNAPTOBREVIN HOMOLOG YKT6"/>
    <property type="match status" value="1"/>
</dbReference>
<dbReference type="PANTHER" id="PTHR45806:SF1">
    <property type="entry name" value="SYNAPTOBREVIN HOMOLOG YKT6"/>
    <property type="match status" value="1"/>
</dbReference>
<dbReference type="Pfam" id="PF13774">
    <property type="entry name" value="Longin"/>
    <property type="match status" value="1"/>
</dbReference>
<dbReference type="Pfam" id="PF00957">
    <property type="entry name" value="Synaptobrevin"/>
    <property type="match status" value="1"/>
</dbReference>
<dbReference type="SMART" id="SM01270">
    <property type="entry name" value="Longin"/>
    <property type="match status" value="1"/>
</dbReference>
<dbReference type="SUPFAM" id="SSF58038">
    <property type="entry name" value="SNARE fusion complex"/>
    <property type="match status" value="1"/>
</dbReference>
<dbReference type="SUPFAM" id="SSF64356">
    <property type="entry name" value="SNARE-like"/>
    <property type="match status" value="1"/>
</dbReference>
<dbReference type="PROSITE" id="PS50859">
    <property type="entry name" value="LONGIN"/>
    <property type="match status" value="1"/>
</dbReference>
<dbReference type="PROSITE" id="PS50892">
    <property type="entry name" value="V_SNARE"/>
    <property type="match status" value="1"/>
</dbReference>